<gene>
    <name evidence="1" type="primary">mtfA</name>
</gene>
<reference key="1">
    <citation type="submission" date="2001-07" db="EMBL/GenBank/DDBJ databases">
        <authorList>
            <person name="Smajs D."/>
            <person name="Smarda J."/>
            <person name="Weinstock G.M."/>
        </authorList>
    </citation>
    <scope>NUCLEOTIDE SEQUENCE [GENOMIC DNA]</scope>
    <source>
        <strain>EF873</strain>
    </source>
</reference>
<feature type="chain" id="PRO_0000316317" description="Mlc titration factor A">
    <location>
        <begin position="1"/>
        <end position="265"/>
    </location>
</feature>
<feature type="binding site" evidence="1">
    <location>
        <position position="111"/>
    </location>
    <ligand>
        <name>Zn(2+)</name>
        <dbReference type="ChEBI" id="CHEBI:29105"/>
    </ligand>
</feature>
<feature type="binding site" evidence="1">
    <location>
        <position position="148"/>
    </location>
    <ligand>
        <name>Zn(2+)</name>
        <dbReference type="ChEBI" id="CHEBI:29105"/>
    </ligand>
</feature>
<feature type="binding site" evidence="1">
    <location>
        <position position="152"/>
    </location>
    <ligand>
        <name>Zn(2+)</name>
        <dbReference type="ChEBI" id="CHEBI:29105"/>
    </ligand>
</feature>
<feature type="binding site" evidence="1">
    <location>
        <position position="211"/>
    </location>
    <ligand>
        <name>Zn(2+)</name>
        <dbReference type="ChEBI" id="CHEBI:29105"/>
    </ligand>
</feature>
<organism>
    <name type="scientific">Escherichia fergusonii</name>
    <dbReference type="NCBI Taxonomy" id="564"/>
    <lineage>
        <taxon>Bacteria</taxon>
        <taxon>Pseudomonadati</taxon>
        <taxon>Pseudomonadota</taxon>
        <taxon>Gammaproteobacteria</taxon>
        <taxon>Enterobacterales</taxon>
        <taxon>Enterobacteriaceae</taxon>
        <taxon>Escherichia</taxon>
    </lineage>
</organism>
<keyword id="KW-0031">Aminopeptidase</keyword>
<keyword id="KW-0963">Cytoplasm</keyword>
<keyword id="KW-0378">Hydrolase</keyword>
<keyword id="KW-0479">Metal-binding</keyword>
<keyword id="KW-0482">Metalloprotease</keyword>
<keyword id="KW-0645">Protease</keyword>
<keyword id="KW-0862">Zinc</keyword>
<proteinExistence type="inferred from homology"/>
<sequence length="265" mass="30133">MIKWPWKTNDAGRNMALPWDEALAIPVLANLQPDEQSKLVQLADRFLQQKRLVPLQGFELDPLKNARIALLFCLPVLELGIEWLDGFHEVLIYPAPFVVDDEWQDDFGLVHNQRVVQSGQSWQQGPIILNWLDIQDSFDASGFNLIIHEVAHKLDTRNGDRASGVPLIPLREVAGWEHDLHAAMDNIQDEIDLVGESAASIDAYAATDPAECFAVLSEYFFSAPELFAPRFPALWQRFCQFYQQDPLLRLRQNEDPAGNSSHQLH</sequence>
<evidence type="ECO:0000255" key="1">
    <source>
        <dbReference type="HAMAP-Rule" id="MF_01593"/>
    </source>
</evidence>
<comment type="function">
    <text evidence="1">Involved in the modulation of the activity of the glucose-phosphotransferase system (glucose-PTS). Interacts with the transcriptional repressor Mlc, preventing its interaction with DNA and leading to the modulation of expression of genes regulated by Mlc, including ptsG, which encodes the PTS system glucose-specific EIICB component.</text>
</comment>
<comment type="function">
    <text evidence="1">Shows zinc-dependent metallopeptidase activity.</text>
</comment>
<comment type="cofactor">
    <cofactor evidence="1">
        <name>Zn(2+)</name>
        <dbReference type="ChEBI" id="CHEBI:29105"/>
    </cofactor>
    <text evidence="1">Binds 1 zinc ion per subunit.</text>
</comment>
<comment type="subunit">
    <text evidence="1">Interacts with Mlc.</text>
</comment>
<comment type="subcellular location">
    <subcellularLocation>
        <location evidence="1">Cytoplasm</location>
    </subcellularLocation>
</comment>
<comment type="similarity">
    <text evidence="1">Belongs to the MtfA family.</text>
</comment>
<accession>Q8KR59</accession>
<dbReference type="EC" id="3.4.11.-" evidence="1"/>
<dbReference type="EMBL" id="AY046057">
    <property type="protein sequence ID" value="AAL01544.1"/>
    <property type="molecule type" value="Genomic_DNA"/>
</dbReference>
<dbReference type="SMR" id="Q8KR59"/>
<dbReference type="MEROPS" id="M90.001"/>
<dbReference type="GO" id="GO:0005829">
    <property type="term" value="C:cytosol"/>
    <property type="evidence" value="ECO:0007669"/>
    <property type="project" value="TreeGrafter"/>
</dbReference>
<dbReference type="GO" id="GO:0004177">
    <property type="term" value="F:aminopeptidase activity"/>
    <property type="evidence" value="ECO:0007669"/>
    <property type="project" value="UniProtKB-UniRule"/>
</dbReference>
<dbReference type="GO" id="GO:0008237">
    <property type="term" value="F:metallopeptidase activity"/>
    <property type="evidence" value="ECO:0007669"/>
    <property type="project" value="UniProtKB-UniRule"/>
</dbReference>
<dbReference type="GO" id="GO:0008270">
    <property type="term" value="F:zinc ion binding"/>
    <property type="evidence" value="ECO:0007669"/>
    <property type="project" value="UniProtKB-UniRule"/>
</dbReference>
<dbReference type="GO" id="GO:0006508">
    <property type="term" value="P:proteolysis"/>
    <property type="evidence" value="ECO:0007669"/>
    <property type="project" value="UniProtKB-KW"/>
</dbReference>
<dbReference type="CDD" id="cd20169">
    <property type="entry name" value="Peptidase_M90_mtfA"/>
    <property type="match status" value="1"/>
</dbReference>
<dbReference type="FunFam" id="1.10.472.150:FF:000001">
    <property type="entry name" value="Protein MtfA"/>
    <property type="match status" value="1"/>
</dbReference>
<dbReference type="FunFam" id="3.40.390.10:FF:000012">
    <property type="entry name" value="Protein MtfA"/>
    <property type="match status" value="1"/>
</dbReference>
<dbReference type="Gene3D" id="3.40.390.10">
    <property type="entry name" value="Collagenase (Catalytic Domain)"/>
    <property type="match status" value="1"/>
</dbReference>
<dbReference type="Gene3D" id="1.10.472.150">
    <property type="entry name" value="Glucose-regulated metallo-peptidase M90, N-terminal domain"/>
    <property type="match status" value="1"/>
</dbReference>
<dbReference type="HAMAP" id="MF_01593">
    <property type="entry name" value="MtfA"/>
    <property type="match status" value="1"/>
</dbReference>
<dbReference type="InterPro" id="IPR024079">
    <property type="entry name" value="MetalloPept_cat_dom_sf"/>
</dbReference>
<dbReference type="InterPro" id="IPR057256">
    <property type="entry name" value="MtfA_enterob"/>
</dbReference>
<dbReference type="InterPro" id="IPR010384">
    <property type="entry name" value="MtfA_fam"/>
</dbReference>
<dbReference type="InterPro" id="IPR042252">
    <property type="entry name" value="MtfA_N"/>
</dbReference>
<dbReference type="NCBIfam" id="NF011939">
    <property type="entry name" value="PRK15410.1"/>
    <property type="match status" value="1"/>
</dbReference>
<dbReference type="PANTHER" id="PTHR30164">
    <property type="entry name" value="MTFA PEPTIDASE"/>
    <property type="match status" value="1"/>
</dbReference>
<dbReference type="PANTHER" id="PTHR30164:SF2">
    <property type="entry name" value="PROTEIN MTFA"/>
    <property type="match status" value="1"/>
</dbReference>
<dbReference type="Pfam" id="PF06167">
    <property type="entry name" value="Peptidase_M90"/>
    <property type="match status" value="1"/>
</dbReference>
<dbReference type="SUPFAM" id="SSF55486">
    <property type="entry name" value="Metalloproteases ('zincins'), catalytic domain"/>
    <property type="match status" value="1"/>
</dbReference>
<name>MTFA_ESCFE</name>
<protein>
    <recommendedName>
        <fullName evidence="1">Mlc titration factor A</fullName>
    </recommendedName>
    <alternativeName>
        <fullName evidence="1">Probable zinc metallopeptidase MtfA</fullName>
        <ecNumber evidence="1">3.4.11.-</ecNumber>
    </alternativeName>
</protein>